<gene>
    <name evidence="1" type="primary">fucU</name>
    <name type="ordered locus">SSPA2648</name>
</gene>
<organism>
    <name type="scientific">Salmonella paratyphi A (strain AKU_12601)</name>
    <dbReference type="NCBI Taxonomy" id="554290"/>
    <lineage>
        <taxon>Bacteria</taxon>
        <taxon>Pseudomonadati</taxon>
        <taxon>Pseudomonadota</taxon>
        <taxon>Gammaproteobacteria</taxon>
        <taxon>Enterobacterales</taxon>
        <taxon>Enterobacteriaceae</taxon>
        <taxon>Salmonella</taxon>
    </lineage>
</organism>
<protein>
    <recommendedName>
        <fullName evidence="1">L-fucose mutarotase</fullName>
        <ecNumber evidence="1">5.1.3.29</ecNumber>
    </recommendedName>
    <alternativeName>
        <fullName evidence="1">Fucose 1-epimerase</fullName>
    </alternativeName>
    <alternativeName>
        <fullName evidence="1">Type-2 mutarotase</fullName>
    </alternativeName>
</protein>
<reference key="1">
    <citation type="journal article" date="2009" name="BMC Genomics">
        <title>Pseudogene accumulation in the evolutionary histories of Salmonella enterica serovars Paratyphi A and Typhi.</title>
        <authorList>
            <person name="Holt K.E."/>
            <person name="Thomson N.R."/>
            <person name="Wain J."/>
            <person name="Langridge G.C."/>
            <person name="Hasan R."/>
            <person name="Bhutta Z.A."/>
            <person name="Quail M.A."/>
            <person name="Norbertczak H."/>
            <person name="Walker D."/>
            <person name="Simmonds M."/>
            <person name="White B."/>
            <person name="Bason N."/>
            <person name="Mungall K."/>
            <person name="Dougan G."/>
            <person name="Parkhill J."/>
        </authorList>
    </citation>
    <scope>NUCLEOTIDE SEQUENCE [LARGE SCALE GENOMIC DNA]</scope>
    <source>
        <strain>AKU_12601</strain>
    </source>
</reference>
<feature type="chain" id="PRO_1000187200" description="L-fucose mutarotase">
    <location>
        <begin position="1"/>
        <end position="140"/>
    </location>
</feature>
<feature type="active site" description="Proton donor" evidence="1">
    <location>
        <position position="22"/>
    </location>
</feature>
<feature type="binding site" evidence="1">
    <location>
        <position position="30"/>
    </location>
    <ligand>
        <name>substrate</name>
    </ligand>
</feature>
<feature type="binding site" evidence="1">
    <location>
        <position position="107"/>
    </location>
    <ligand>
        <name>substrate</name>
    </ligand>
</feature>
<feature type="binding site" evidence="1">
    <location>
        <begin position="129"/>
        <end position="131"/>
    </location>
    <ligand>
        <name>substrate</name>
    </ligand>
</feature>
<sequence>MLKTISPLISPTLLKVLAEMGHGDEIIFSDAHFPAHSLGPQVIRADGLSVSDLLRAIIPLFELDSYAPPLVMMAAVEGDTLDPSVEARYRDALSLEAPCPDIVRIDRYAFYERAQKAFAIVITGECAKYGNILLKKGVTP</sequence>
<keyword id="KW-0119">Carbohydrate metabolism</keyword>
<keyword id="KW-0963">Cytoplasm</keyword>
<keyword id="KW-0294">Fucose metabolism</keyword>
<keyword id="KW-0413">Isomerase</keyword>
<accession>B5BF33</accession>
<proteinExistence type="inferred from homology"/>
<comment type="function">
    <text evidence="1">Involved in the anomeric conversion of L-fucose.</text>
</comment>
<comment type="catalytic activity">
    <reaction evidence="1">
        <text>alpha-L-fucose = beta-L-fucose</text>
        <dbReference type="Rhea" id="RHEA:25580"/>
        <dbReference type="ChEBI" id="CHEBI:42548"/>
        <dbReference type="ChEBI" id="CHEBI:42589"/>
        <dbReference type="EC" id="5.1.3.29"/>
    </reaction>
</comment>
<comment type="pathway">
    <text evidence="1">Carbohydrate metabolism; L-fucose metabolism.</text>
</comment>
<comment type="subunit">
    <text evidence="1">Homodecamer.</text>
</comment>
<comment type="subcellular location">
    <subcellularLocation>
        <location evidence="1">Cytoplasm</location>
    </subcellularLocation>
</comment>
<comment type="similarity">
    <text evidence="1">Belongs to the RbsD / FucU family. FucU mutarotase subfamily.</text>
</comment>
<name>FUCM_SALPK</name>
<dbReference type="EC" id="5.1.3.29" evidence="1"/>
<dbReference type="EMBL" id="FM200053">
    <property type="protein sequence ID" value="CAR60890.1"/>
    <property type="molecule type" value="Genomic_DNA"/>
</dbReference>
<dbReference type="RefSeq" id="WP_000920848.1">
    <property type="nucleotide sequence ID" value="NC_011147.1"/>
</dbReference>
<dbReference type="SMR" id="B5BF33"/>
<dbReference type="KEGG" id="sek:SSPA2648"/>
<dbReference type="HOGENOM" id="CLU_120075_1_0_6"/>
<dbReference type="UniPathway" id="UPA00956"/>
<dbReference type="Proteomes" id="UP000001869">
    <property type="component" value="Chromosome"/>
</dbReference>
<dbReference type="GO" id="GO:0005737">
    <property type="term" value="C:cytoplasm"/>
    <property type="evidence" value="ECO:0007669"/>
    <property type="project" value="UniProtKB-SubCell"/>
</dbReference>
<dbReference type="GO" id="GO:0042806">
    <property type="term" value="F:fucose binding"/>
    <property type="evidence" value="ECO:0007669"/>
    <property type="project" value="InterPro"/>
</dbReference>
<dbReference type="GO" id="GO:0036373">
    <property type="term" value="F:L-fucose mutarotase activity"/>
    <property type="evidence" value="ECO:0007669"/>
    <property type="project" value="UniProtKB-EC"/>
</dbReference>
<dbReference type="GO" id="GO:0036065">
    <property type="term" value="P:fucosylation"/>
    <property type="evidence" value="ECO:0007669"/>
    <property type="project" value="TreeGrafter"/>
</dbReference>
<dbReference type="GO" id="GO:0042354">
    <property type="term" value="P:L-fucose metabolic process"/>
    <property type="evidence" value="ECO:0007669"/>
    <property type="project" value="UniProtKB-UniRule"/>
</dbReference>
<dbReference type="FunFam" id="3.40.1650.10:FF:000001">
    <property type="entry name" value="L-fucose mutarotase"/>
    <property type="match status" value="1"/>
</dbReference>
<dbReference type="Gene3D" id="3.40.1650.10">
    <property type="entry name" value="RbsD-like domain"/>
    <property type="match status" value="1"/>
</dbReference>
<dbReference type="HAMAP" id="MF_01662">
    <property type="entry name" value="L_fucose_rotase"/>
    <property type="match status" value="1"/>
</dbReference>
<dbReference type="InterPro" id="IPR023751">
    <property type="entry name" value="L-fucose_mutarotase"/>
</dbReference>
<dbReference type="InterPro" id="IPR023750">
    <property type="entry name" value="RbsD-like_sf"/>
</dbReference>
<dbReference type="InterPro" id="IPR050443">
    <property type="entry name" value="RbsD/FucU_mutarotase"/>
</dbReference>
<dbReference type="InterPro" id="IPR007721">
    <property type="entry name" value="RbsD_FucU"/>
</dbReference>
<dbReference type="NCBIfam" id="NF011949">
    <property type="entry name" value="PRK15420.1"/>
    <property type="match status" value="1"/>
</dbReference>
<dbReference type="PANTHER" id="PTHR31690">
    <property type="entry name" value="FUCOSE MUTAROTASE"/>
    <property type="match status" value="1"/>
</dbReference>
<dbReference type="PANTHER" id="PTHR31690:SF4">
    <property type="entry name" value="FUCOSE MUTAROTASE"/>
    <property type="match status" value="1"/>
</dbReference>
<dbReference type="Pfam" id="PF05025">
    <property type="entry name" value="RbsD_FucU"/>
    <property type="match status" value="1"/>
</dbReference>
<dbReference type="SUPFAM" id="SSF102546">
    <property type="entry name" value="RbsD-like"/>
    <property type="match status" value="1"/>
</dbReference>
<evidence type="ECO:0000255" key="1">
    <source>
        <dbReference type="HAMAP-Rule" id="MF_01662"/>
    </source>
</evidence>